<reference key="1">
    <citation type="journal article" date="1999" name="Genetics">
        <title>Divergence of the hyperthermophilic archaea Pyrococcus furiosus and P. horikoshii inferred from complete genomic sequences.</title>
        <authorList>
            <person name="Maeder D.L."/>
            <person name="Weiss R.B."/>
            <person name="Dunn D.M."/>
            <person name="Cherry J.L."/>
            <person name="Gonzalez J.M."/>
            <person name="DiRuggiero J."/>
            <person name="Robb F.T."/>
        </authorList>
    </citation>
    <scope>NUCLEOTIDE SEQUENCE [LARGE SCALE GENOMIC DNA]</scope>
    <source>
        <strain>ATCC 43587 / DSM 3638 / JCM 8422 / Vc1</strain>
    </source>
</reference>
<reference key="2">
    <citation type="journal article" date="2006" name="Proc. Natl. Acad. Sci. U.S.A.">
        <title>Structure of Pfu Pop5, an archaeal RNase P protein.</title>
        <authorList>
            <person name="Wilson R.C."/>
            <person name="Bohlen C.J."/>
            <person name="Foster M.P."/>
            <person name="Bell C.E."/>
        </authorList>
    </citation>
    <scope>INTERACTION WITH RNP2</scope>
    <source>
        <strain>ATCC 43587 / DSM 3638 / JCM 8422 / Vc1</strain>
    </source>
</reference>
<reference key="3">
    <citation type="journal article" date="2006" name="Proc. Natl. Acad. Sci. U.S.A.">
        <title>Functional reconstitution and characterization of Pyrococcus furiosus RNase P.</title>
        <authorList>
            <person name="Tsai H.Y."/>
            <person name="Pulukkunat D.K."/>
            <person name="Woznick W.K."/>
            <person name="Gopalan V."/>
        </authorList>
    </citation>
    <scope>FUNCTION</scope>
    <scope>CATALYTIC ACTIVITY</scope>
    <scope>BIOPHYSICOCHEMICAL PROPERTIES</scope>
    <scope>SUBUNIT</scope>
    <source>
        <strain>ATCC 43587 / DSM 3638 / JCM 8422 / Vc1</strain>
    </source>
</reference>
<reference key="4">
    <citation type="journal article" date="2011" name="J. Mol. Biol.">
        <title>Cooperative RNP assembly: complementary rescue of structural defects by protein and RNA subunits of archaeal RNase P.</title>
        <authorList>
            <person name="Chen W.Y."/>
            <person name="Xu Y."/>
            <person name="Cho I.M."/>
            <person name="Oruganti S.V."/>
            <person name="Foster M.P."/>
            <person name="Gopalan V."/>
        </authorList>
    </citation>
    <scope>FUNCTION</scope>
    <scope>SUBUNIT</scope>
</reference>
<reference key="5">
    <citation type="journal article" date="2012" name="Nucleic Acids Res.">
        <title>Fidelity of tRNA 5'-maturation: a possible basis for the functional dependence of archaeal and eukaryal RNase P on multiple protein cofactors.</title>
        <authorList>
            <person name="Chen W.Y."/>
            <person name="Singh D."/>
            <person name="Lai L.B."/>
            <person name="Stiffler M.A."/>
            <person name="Lai H.D."/>
            <person name="Foster M.P."/>
            <person name="Gopalan V."/>
        </authorList>
    </citation>
    <scope>FUNCTION</scope>
    <scope>INTERACTION WITH RNP2</scope>
    <scope>SUBUNIT</scope>
</reference>
<name>RNP3_PYRFU</name>
<keyword id="KW-0963">Cytoplasm</keyword>
<keyword id="KW-0255">Endonuclease</keyword>
<keyword id="KW-0378">Hydrolase</keyword>
<keyword id="KW-0540">Nuclease</keyword>
<keyword id="KW-1185">Reference proteome</keyword>
<keyword id="KW-0819">tRNA processing</keyword>
<protein>
    <recommendedName>
        <fullName evidence="1">Ribonuclease P protein component 3</fullName>
        <shortName evidence="1">RNase P component 3</shortName>
        <ecNumber evidence="1">3.1.26.5</ecNumber>
    </recommendedName>
    <alternativeName>
        <fullName evidence="1">Rpp30</fullName>
    </alternativeName>
</protein>
<dbReference type="EC" id="3.1.26.5" evidence="1"/>
<dbReference type="EMBL" id="AE009950">
    <property type="protein sequence ID" value="AAL82038.1"/>
    <property type="molecule type" value="Genomic_DNA"/>
</dbReference>
<dbReference type="RefSeq" id="WP_011013054.1">
    <property type="nucleotide sequence ID" value="NZ_CP023154.1"/>
</dbReference>
<dbReference type="BMRB" id="Q8TZS0"/>
<dbReference type="SMR" id="Q8TZS0"/>
<dbReference type="IntAct" id="Q8TZS0">
    <property type="interactions" value="1"/>
</dbReference>
<dbReference type="STRING" id="186497.PF1914"/>
<dbReference type="PaxDb" id="186497-PF1914"/>
<dbReference type="KEGG" id="pfu:PF1914"/>
<dbReference type="PATRIC" id="fig|186497.12.peg.1985"/>
<dbReference type="eggNOG" id="arCOG00307">
    <property type="taxonomic scope" value="Archaea"/>
</dbReference>
<dbReference type="HOGENOM" id="CLU_1302679_0_0_2"/>
<dbReference type="OrthoDB" id="85765at2157"/>
<dbReference type="PhylomeDB" id="Q8TZS0"/>
<dbReference type="Proteomes" id="UP000001013">
    <property type="component" value="Chromosome"/>
</dbReference>
<dbReference type="GO" id="GO:0005737">
    <property type="term" value="C:cytoplasm"/>
    <property type="evidence" value="ECO:0007669"/>
    <property type="project" value="UniProtKB-SubCell"/>
</dbReference>
<dbReference type="GO" id="GO:0030677">
    <property type="term" value="C:ribonuclease P complex"/>
    <property type="evidence" value="ECO:0007669"/>
    <property type="project" value="UniProtKB-UniRule"/>
</dbReference>
<dbReference type="GO" id="GO:0004526">
    <property type="term" value="F:ribonuclease P activity"/>
    <property type="evidence" value="ECO:0007669"/>
    <property type="project" value="UniProtKB-UniRule"/>
</dbReference>
<dbReference type="GO" id="GO:0001682">
    <property type="term" value="P:tRNA 5'-leader removal"/>
    <property type="evidence" value="ECO:0007669"/>
    <property type="project" value="UniProtKB-UniRule"/>
</dbReference>
<dbReference type="Gene3D" id="3.20.20.140">
    <property type="entry name" value="Metal-dependent hydrolases"/>
    <property type="match status" value="1"/>
</dbReference>
<dbReference type="HAMAP" id="MF_00756">
    <property type="entry name" value="RNase_P_3"/>
    <property type="match status" value="1"/>
</dbReference>
<dbReference type="InterPro" id="IPR016195">
    <property type="entry name" value="Pol/histidinol_Pase-like"/>
</dbReference>
<dbReference type="InterPro" id="IPR023539">
    <property type="entry name" value="RNase_P_comp-3_arc"/>
</dbReference>
<dbReference type="InterPro" id="IPR002738">
    <property type="entry name" value="RNase_P_p30"/>
</dbReference>
<dbReference type="NCBIfam" id="NF003023">
    <property type="entry name" value="PRK03892.1"/>
    <property type="match status" value="1"/>
</dbReference>
<dbReference type="Pfam" id="PF01876">
    <property type="entry name" value="RNase_P_p30"/>
    <property type="match status" value="1"/>
</dbReference>
<dbReference type="SUPFAM" id="SSF89550">
    <property type="entry name" value="PHP domain-like"/>
    <property type="match status" value="1"/>
</dbReference>
<gene>
    <name evidence="1" type="primary">rnp3</name>
    <name type="ordered locus">PF1914</name>
</gene>
<feature type="chain" id="PRO_0000140045" description="Ribonuclease P protein component 3">
    <location>
        <begin position="1"/>
        <end position="214"/>
    </location>
</feature>
<sequence>MAGGRNGVKFVEMDIRSREAYELAEEWFDDVVFSYEIPPGVLDKERLKEIKKEYGNVAITLINPKPSLVKEAVQRFKQNYLIYVESSDLRVVRYSIERGVDAVISPWANRKDQGIDHVLARMMNKRGVALGFSLRPLLHQNPYERANALKFMRKAWTLVNKYKVPRFISSSAKGKFQVRGVKELISLGIAIGMEEVQAKASLSFYPLGILERLK</sequence>
<comment type="function">
    <text evidence="1 2 3 4">Part of ribonuclease P, a protein complex that generates mature tRNA molecules by cleaving their 5'-ends. The RNA is catalytic, but its KM for pre-tRNA is 170-fold decreased in the presence of the 4 known protein subunits (Rnp1-4). The protein subunits also decrease the amount of Mg(2+) needed for activity.</text>
</comment>
<comment type="catalytic activity">
    <reaction evidence="1 2">
        <text>Endonucleolytic cleavage of RNA, removing 5'-extranucleotides from tRNA precursor.</text>
        <dbReference type="EC" id="3.1.26.5"/>
    </reaction>
</comment>
<comment type="biophysicochemical properties">
    <kinetics>
        <KM evidence="2">0.18 uM for E.coli pre-tRNA(Tyr)</KM>
        <text>kcat is 9.5 min(-1). For enzyme reconstituted with RNA and 4 known subunits (Rnp1-4).</text>
    </kinetics>
</comment>
<comment type="subunit">
    <text evidence="1 2 3 4">Consists of a catalytic RNA component and at least 4-5 protein subunits. Forms a subcomplex with Rnp2 which stimulates the catalytic RNA.</text>
</comment>
<comment type="subcellular location">
    <subcellularLocation>
        <location evidence="1">Cytoplasm</location>
    </subcellularLocation>
</comment>
<comment type="similarity">
    <text evidence="1">Belongs to the eukaryotic/archaeal RNase P protein component 3 family.</text>
</comment>
<evidence type="ECO:0000255" key="1">
    <source>
        <dbReference type="HAMAP-Rule" id="MF_00756"/>
    </source>
</evidence>
<evidence type="ECO:0000269" key="2">
    <source>
    </source>
</evidence>
<evidence type="ECO:0000269" key="3">
    <source>
    </source>
</evidence>
<evidence type="ECO:0000269" key="4">
    <source>
    </source>
</evidence>
<proteinExistence type="evidence at protein level"/>
<organism>
    <name type="scientific">Pyrococcus furiosus (strain ATCC 43587 / DSM 3638 / JCM 8422 / Vc1)</name>
    <dbReference type="NCBI Taxonomy" id="186497"/>
    <lineage>
        <taxon>Archaea</taxon>
        <taxon>Methanobacteriati</taxon>
        <taxon>Methanobacteriota</taxon>
        <taxon>Thermococci</taxon>
        <taxon>Thermococcales</taxon>
        <taxon>Thermococcaceae</taxon>
        <taxon>Pyrococcus</taxon>
    </lineage>
</organism>
<accession>Q8TZS0</accession>